<name>NCTSP_BPN4</name>
<gene>
    <name type="primary">65</name>
</gene>
<accession>A0MZE7</accession>
<keyword id="KW-0945">Host-virus interaction</keyword>
<keyword id="KW-1185">Reference proteome</keyword>
<keyword id="KW-1233">Viral attachment to host adhesion receptor</keyword>
<keyword id="KW-1161">Viral attachment to host cell</keyword>
<keyword id="KW-1227">Viral tail protein</keyword>
<keyword id="KW-0946">Virion</keyword>
<keyword id="KW-1160">Virus entry into host cell</keyword>
<comment type="function">
    <text evidence="1 2">Assembles to form the non-contractile sheath that surrounds the tail tube (PubMed:18374942). Allows viral attachment to the host by binding the bacterial outer membrane protein NfrA (PubMed:19011026).</text>
</comment>
<comment type="subunit">
    <text evidence="2">Interacts with host NfrA receptor; this interaction is essential for viral adsorption to the host.</text>
</comment>
<comment type="subcellular location">
    <subcellularLocation>
        <location evidence="1">Virion</location>
    </subcellularLocation>
    <text evidence="1">Present in about 6 copies in the virion.</text>
</comment>
<comment type="miscellaneous">
    <text evidence="3">It is uncommon for short-tailed phages to have a tail tube inside a non-contractile sheath.</text>
</comment>
<protein>
    <recommendedName>
        <fullName>Non-contractile tail sheath</fullName>
    </recommendedName>
    <alternativeName>
        <fullName>Gene product 65</fullName>
        <shortName>Gp65</shortName>
    </alternativeName>
</protein>
<organism>
    <name type="scientific">Enterobacteria phage N4</name>
    <name type="common">Bacteriophage N4</name>
    <dbReference type="NCBI Taxonomy" id="2886925"/>
    <lineage>
        <taxon>Viruses</taxon>
        <taxon>Duplodnaviria</taxon>
        <taxon>Heunggongvirae</taxon>
        <taxon>Uroviricota</taxon>
        <taxon>Caudoviricetes</taxon>
        <taxon>Schitoviridae</taxon>
        <taxon>Enquatrovirinae</taxon>
        <taxon>Enquatrovirus</taxon>
        <taxon>Enquatrovirus N4</taxon>
    </lineage>
</organism>
<organismHost>
    <name type="scientific">Escherichia coli</name>
    <dbReference type="NCBI Taxonomy" id="562"/>
</organismHost>
<evidence type="ECO:0000269" key="1">
    <source>
    </source>
</evidence>
<evidence type="ECO:0000269" key="2">
    <source>
    </source>
</evidence>
<evidence type="ECO:0000305" key="3"/>
<proteinExistence type="evidence at protein level"/>
<feature type="chain" id="PRO_0000436253" description="Non-contractile tail sheath">
    <location>
        <begin position="1"/>
        <end position="1382"/>
    </location>
</feature>
<reference key="1">
    <citation type="submission" date="2006-11" db="EMBL/GenBank/DDBJ databases">
        <title>Genome sequence and analysis of bacteriophage N4.</title>
        <authorList>
            <person name="Hendrix R.W."/>
            <person name="Rothman-Denes L."/>
            <person name="Hatfull G.F."/>
            <person name="Lawrence J.G."/>
            <person name="Pedulla M."/>
        </authorList>
    </citation>
    <scope>NUCLEOTIDE SEQUENCE [LARGE SCALE GENOMIC DNA]</scope>
</reference>
<reference key="2">
    <citation type="journal article" date="2008" name="J. Mol. Biol.">
        <title>Insight into DNA and protein transport in double-stranded DNA viruses: the structure of bacteriophage N4.</title>
        <authorList>
            <person name="Choi K.H."/>
            <person name="McPartland J."/>
            <person name="Kaganman I."/>
            <person name="Bowman V.D."/>
            <person name="Rothman-Denes L.B."/>
            <person name="Rossmann M.G."/>
        </authorList>
    </citation>
    <scope>ELECTRON MICROSCOPY (14 ANGSTROMS) OF COMPLETE VIRION</scope>
    <scope>FUNCTION</scope>
    <scope>SUBCELLULAR LOCATION</scope>
</reference>
<reference key="3">
    <citation type="journal article" date="2009" name="J. Bacteriol.">
        <title>The tail sheath of bacteriophage N4 interacts with the Escherichia coli receptor.</title>
        <authorList>
            <person name="McPartland J."/>
            <person name="Rothman-Denes L.B."/>
        </authorList>
    </citation>
    <scope>FUNCTION</scope>
    <scope>INTERACTION WITH E.COLI NFRA</scope>
</reference>
<sequence>MSIEDYLKGKNCLASPNYDPDDQHSSWREDLPQFKKDREHLTLVNTRRNRTYNTKLNRFDPEYWVVDYNALMVATIIPYGSKSFKVPCQWRTNKDFLGVRWMTEDTFDHHLYRYETDPNYLGLILAFRHNPDEPDKFTVTIQTPEKAYTYRLAPYGFNNKTRRWECLDTKYGTKRTYQADIFVATDEDIPESEMTEVYGTKDYIFILDFADLRTGVAFNGVTINPRNITMISFDCTEAHHGLGKDAYIAAMYNNDDGATFQMEIGGIHTNAALAAGDKLQCIWRYLDVNGNAQAAENEFEVVSYEGFGTSNFSVKCKGMLPGKFIGCDAFYGKYLQTDGPIKQVDSVKWFTNLTVSGSGRKQLGQRKYPQVVMGMGMTSGFDDGYNLTPERQVKMAYGLGYRDWWTTYIGMSHYWKGLTAFQDKETGELITEQTVLDYPILFAGESQVAIHFMSGAYPDRGYDVFQKYMTETWGINYAGVHPINGTTGSTAVDRACAVNPNSEVFDPTQSSGAGGLWWWDLEADKPGPALLHCVGQVGKLKPKAIIWGQGDQDATALAYPGDRNPAPSLTRTKQATKKVFEYLRSLYGQIPIFIQELSYAWGITNTDAPNVPIRTGLPSFLAARRNTWGDIEFRWKSYGLDPALAQYRIEIYNPSNLNQILHSFVVSGTQEANGYVYADFTVEDWIPVMMEAVGSPNPWEFMKWRVVCLYQEREIPSAPWSDNIPLDNAGLVKKTILVGINQFGGGHFTDMSDPTATTANGAIGRKDKVSASTLRLTFAEKAGLRPIQVMPVNVAADSAGMTVGTHKWWNTSSNSPGDALLAINDMVKGLGVKPDYFIEANPWETMYMKDVNSSTWPALMTAFESSNKAMLAWMRTNWGNPNLEIWFQGATTVWFGVAPPNDLNSEATVTVRDKQIQMATANIGFKLGSFVPGSNLYTAYRNVESSWIYYTVEAFHATAIELGEALALNINRATNPPDWSYLRPPANLQGRKLATRDIKMTWDNRAGITHWKYANRHVTTGAEISSGILTSPEYVFTLNDQQNAYNGDTLNMSFSVSEYAADSGAVGASSSFVGVVQNGSYMQTPTQLKAAKQLNGDIIFTWVGRPSWQHFWVVNTSVNDSKTVIFSKEWSSESLTWTVAEQNEFYGLEEGGATHVIFMVSEYDPSNGLVSIGAQVTGQAEQPSNPMNPVAGLYAVFTGDPGNSNIKIMWDKPSVGGRDVRIRNMHVTSSATISDQFVSDNNLVFTREEQVAAYGFTASSVSVRAQEHDIESGALGLTTEYVAVPETAGTVGQGFAKKDSVGNCTMSWEVGDAVQWQVEILNAENSTVVKTEIVVAPTITWMAEEITAEYGYLTDHMVWRVRPYRADGASNVAKQFDMTATL</sequence>
<dbReference type="EMBL" id="EF056009">
    <property type="protein sequence ID" value="ABK54426.1"/>
    <property type="molecule type" value="Genomic_DNA"/>
</dbReference>
<dbReference type="RefSeq" id="YP_950543.1">
    <property type="nucleotide sequence ID" value="NC_008720.1"/>
</dbReference>
<dbReference type="KEGG" id="vg:5075714"/>
<dbReference type="Proteomes" id="UP000001789">
    <property type="component" value="Genome"/>
</dbReference>
<dbReference type="GO" id="GO:0098015">
    <property type="term" value="C:virus tail"/>
    <property type="evidence" value="ECO:0007669"/>
    <property type="project" value="UniProtKB-KW"/>
</dbReference>
<dbReference type="GO" id="GO:0098671">
    <property type="term" value="P:adhesion receptor-mediated virion attachment to host cell"/>
    <property type="evidence" value="ECO:0007669"/>
    <property type="project" value="UniProtKB-KW"/>
</dbReference>
<dbReference type="GO" id="GO:0046718">
    <property type="term" value="P:symbiont entry into host cell"/>
    <property type="evidence" value="ECO:0007669"/>
    <property type="project" value="UniProtKB-KW"/>
</dbReference>
<dbReference type="Pfam" id="PF23844">
    <property type="entry name" value="NCTSP_N"/>
    <property type="match status" value="1"/>
</dbReference>
<dbReference type="Pfam" id="PF23845">
    <property type="entry name" value="TIM-barrel_NCTSP"/>
    <property type="match status" value="1"/>
</dbReference>